<evidence type="ECO:0000250" key="1">
    <source>
        <dbReference type="UniProtKB" id="Q9H3P7"/>
    </source>
</evidence>
<evidence type="ECO:0000255" key="2"/>
<evidence type="ECO:0000255" key="3">
    <source>
        <dbReference type="PROSITE-ProRule" id="PRU00096"/>
    </source>
</evidence>
<evidence type="ECO:0000255" key="4">
    <source>
        <dbReference type="PROSITE-ProRule" id="PRU00573"/>
    </source>
</evidence>
<evidence type="ECO:0000256" key="5">
    <source>
        <dbReference type="SAM" id="MobiDB-lite"/>
    </source>
</evidence>
<evidence type="ECO:0000269" key="6">
    <source>
    </source>
</evidence>
<evidence type="ECO:0000269" key="7">
    <source>
    </source>
</evidence>
<feature type="initiator methionine" description="Removed" evidence="1">
    <location>
        <position position="1"/>
    </location>
</feature>
<feature type="chain" id="PRO_0000436450" description="Golgi resident protein GCP60">
    <location>
        <begin position="2"/>
        <end position="525"/>
    </location>
</feature>
<feature type="domain" description="ACB" evidence="4">
    <location>
        <begin position="80"/>
        <end position="171"/>
    </location>
</feature>
<feature type="domain" description="GOLD" evidence="3">
    <location>
        <begin position="381"/>
        <end position="523"/>
    </location>
</feature>
<feature type="region of interest" description="Disordered" evidence="5">
    <location>
        <begin position="12"/>
        <end position="68"/>
    </location>
</feature>
<feature type="region of interest" description="Disordered" evidence="5">
    <location>
        <begin position="180"/>
        <end position="226"/>
    </location>
</feature>
<feature type="region of interest" description="Q domain; Interaction with PI4KB, TBC1D22A and TBC1D22B" evidence="1">
    <location>
        <begin position="238"/>
        <end position="305"/>
    </location>
</feature>
<feature type="region of interest" description="Disordered" evidence="5">
    <location>
        <begin position="319"/>
        <end position="346"/>
    </location>
</feature>
<feature type="coiled-coil region" evidence="2">
    <location>
        <begin position="169"/>
        <end position="254"/>
    </location>
</feature>
<feature type="coiled-coil region" evidence="2">
    <location>
        <begin position="448"/>
        <end position="470"/>
    </location>
</feature>
<feature type="compositionally biased region" description="Low complexity" evidence="5">
    <location>
        <begin position="52"/>
        <end position="64"/>
    </location>
</feature>
<feature type="compositionally biased region" description="Polar residues" evidence="5">
    <location>
        <begin position="319"/>
        <end position="336"/>
    </location>
</feature>
<feature type="compositionally biased region" description="Basic and acidic residues" evidence="5">
    <location>
        <begin position="337"/>
        <end position="346"/>
    </location>
</feature>
<feature type="modified residue" description="N-acetylalanine" evidence="1">
    <location>
        <position position="2"/>
    </location>
</feature>
<feature type="modified residue" description="Phosphoserine" evidence="1">
    <location>
        <position position="13"/>
    </location>
</feature>
<feature type="modified residue" description="Phosphothreonine" evidence="1">
    <location>
        <position position="18"/>
    </location>
</feature>
<feature type="modified residue" description="Phosphoserine" evidence="1">
    <location>
        <position position="20"/>
    </location>
</feature>
<feature type="modified residue" description="Phosphoserine" evidence="1">
    <location>
        <position position="40"/>
    </location>
</feature>
<accession>Q8BMP6</accession>
<accession>O35371</accession>
<keyword id="KW-0007">Acetylation</keyword>
<keyword id="KW-0175">Coiled coil</keyword>
<keyword id="KW-0333">Golgi apparatus</keyword>
<keyword id="KW-0444">Lipid biosynthesis</keyword>
<keyword id="KW-0443">Lipid metabolism</keyword>
<keyword id="KW-0472">Membrane</keyword>
<keyword id="KW-0496">Mitochondrion</keyword>
<keyword id="KW-0597">Phosphoprotein</keyword>
<keyword id="KW-1185">Reference proteome</keyword>
<keyword id="KW-0752">Steroid biosynthesis</keyword>
<gene>
    <name type="primary">Acbd3</name>
    <name type="synonym">Gcp60</name>
    <name type="synonym">Pap7</name>
</gene>
<protein>
    <recommendedName>
        <fullName>Golgi resident protein GCP60</fullName>
    </recommendedName>
    <alternativeName>
        <fullName>Acyl-CoA-binding domain-containing protein 3</fullName>
    </alternativeName>
    <alternativeName>
        <fullName>Golgi complex-associated protein 1</fullName>
        <shortName>GOCAP1</shortName>
    </alternativeName>
    <alternativeName>
        <fullName>Golgi phosphoprotein 1</fullName>
        <shortName>GOLPH1</shortName>
    </alternativeName>
    <alternativeName>
        <fullName>PBR- and PKA-associated protein 7</fullName>
    </alternativeName>
    <alternativeName>
        <fullName>Peripheral benzodiazepine receptor-associated protein PAP7</fullName>
    </alternativeName>
</protein>
<sequence>MAAQLNVEQLEVSLDGLTLSPDSEERPGAEGAPPQTPPSSAPGNGLGSGASGQQREPGEAAAEGAAEEARRMEQHWGFGLEELYGLALRFYKIKDGKAFHPTYEEKLKFVALHKQVLLGPYNPDTSPEVGFFDVLGNDRRREWAALGNMSKEDAMVEFVKLLNKCCPLLSAYVASHRIEKEEEEKRRKAEEERRQREEEERERLQKEEEKRKREKEDRLRREEEERRRIEEERLRLEQQKQQIMAALNSQTAVQFQQYAAQQYPGNYEQQQILIRQLQEQHYQQYMQQLYQVQLAQQQAALQKQQEVVMAGASLPASSKVNTAGASDTLSVNGQAKTHTENSEKVLEPEAAEEALENGPKDSLPVIAAPSMWTRPQIKDFKEKIRQDADSVITVRRGEVVTVRVPTHEEGSYLFWEFATDSYDIGFGVYFEWTDSPNAAVSVHVSESSDEEEEEEENVTCEEKAKKNANKPLLDEIVPVYRRDCHEEVYAGSHQYPGRGVYLLKFDNSYSLWRSKSVYYRVYYTR</sequence>
<reference key="1">
    <citation type="journal article" date="2001" name="Mol. Endocrinol.">
        <title>Identification, localization, and function in steroidogenesis of PAP7: a peripheral-type benzodiazepine receptor- and PKA (RIalpha)-associated protein.</title>
        <authorList>
            <person name="Li H."/>
            <person name="Degenhardt B."/>
            <person name="Tobin D."/>
            <person name="Yao Z.-X."/>
            <person name="Tasken K."/>
            <person name="Papadopoulos V."/>
        </authorList>
    </citation>
    <scope>NUCLEOTIDE SEQUENCE [MRNA]</scope>
    <scope>INTERACTION WITH PBR AND PKA</scope>
    <scope>TISSUE SPECIFICITY</scope>
    <scope>DEVELOPMENTAL STAGE</scope>
    <source>
        <strain>BALB/cJ</strain>
        <tissue>Testis</tissue>
    </source>
</reference>
<reference key="2">
    <citation type="journal article" date="2003" name="Gene">
        <title>Molecular cloning, genomic organization, chromosomal mapping and subcellular localization of mouse PAP7: a PBR and PKA-RIalpha associated protein.</title>
        <authorList>
            <person name="Liu J."/>
            <person name="Cavalli L.R."/>
            <person name="Haddad B.R."/>
            <person name="Papadopoulos V."/>
        </authorList>
    </citation>
    <scope>NUCLEOTIDE SEQUENCE [GENOMIC DNA]</scope>
    <scope>FUNCTION</scope>
    <scope>SUBCELLULAR LOCATION</scope>
</reference>
<reference key="3">
    <citation type="journal article" date="2005" name="Science">
        <title>The transcriptional landscape of the mammalian genome.</title>
        <authorList>
            <person name="Carninci P."/>
            <person name="Kasukawa T."/>
            <person name="Katayama S."/>
            <person name="Gough J."/>
            <person name="Frith M.C."/>
            <person name="Maeda N."/>
            <person name="Oyama R."/>
            <person name="Ravasi T."/>
            <person name="Lenhard B."/>
            <person name="Wells C."/>
            <person name="Kodzius R."/>
            <person name="Shimokawa K."/>
            <person name="Bajic V.B."/>
            <person name="Brenner S.E."/>
            <person name="Batalov S."/>
            <person name="Forrest A.R."/>
            <person name="Zavolan M."/>
            <person name="Davis M.J."/>
            <person name="Wilming L.G."/>
            <person name="Aidinis V."/>
            <person name="Allen J.E."/>
            <person name="Ambesi-Impiombato A."/>
            <person name="Apweiler R."/>
            <person name="Aturaliya R.N."/>
            <person name="Bailey T.L."/>
            <person name="Bansal M."/>
            <person name="Baxter L."/>
            <person name="Beisel K.W."/>
            <person name="Bersano T."/>
            <person name="Bono H."/>
            <person name="Chalk A.M."/>
            <person name="Chiu K.P."/>
            <person name="Choudhary V."/>
            <person name="Christoffels A."/>
            <person name="Clutterbuck D.R."/>
            <person name="Crowe M.L."/>
            <person name="Dalla E."/>
            <person name="Dalrymple B.P."/>
            <person name="de Bono B."/>
            <person name="Della Gatta G."/>
            <person name="di Bernardo D."/>
            <person name="Down T."/>
            <person name="Engstrom P."/>
            <person name="Fagiolini M."/>
            <person name="Faulkner G."/>
            <person name="Fletcher C.F."/>
            <person name="Fukushima T."/>
            <person name="Furuno M."/>
            <person name="Futaki S."/>
            <person name="Gariboldi M."/>
            <person name="Georgii-Hemming P."/>
            <person name="Gingeras T.R."/>
            <person name="Gojobori T."/>
            <person name="Green R.E."/>
            <person name="Gustincich S."/>
            <person name="Harbers M."/>
            <person name="Hayashi Y."/>
            <person name="Hensch T.K."/>
            <person name="Hirokawa N."/>
            <person name="Hill D."/>
            <person name="Huminiecki L."/>
            <person name="Iacono M."/>
            <person name="Ikeo K."/>
            <person name="Iwama A."/>
            <person name="Ishikawa T."/>
            <person name="Jakt M."/>
            <person name="Kanapin A."/>
            <person name="Katoh M."/>
            <person name="Kawasawa Y."/>
            <person name="Kelso J."/>
            <person name="Kitamura H."/>
            <person name="Kitano H."/>
            <person name="Kollias G."/>
            <person name="Krishnan S.P."/>
            <person name="Kruger A."/>
            <person name="Kummerfeld S.K."/>
            <person name="Kurochkin I.V."/>
            <person name="Lareau L.F."/>
            <person name="Lazarevic D."/>
            <person name="Lipovich L."/>
            <person name="Liu J."/>
            <person name="Liuni S."/>
            <person name="McWilliam S."/>
            <person name="Madan Babu M."/>
            <person name="Madera M."/>
            <person name="Marchionni L."/>
            <person name="Matsuda H."/>
            <person name="Matsuzawa S."/>
            <person name="Miki H."/>
            <person name="Mignone F."/>
            <person name="Miyake S."/>
            <person name="Morris K."/>
            <person name="Mottagui-Tabar S."/>
            <person name="Mulder N."/>
            <person name="Nakano N."/>
            <person name="Nakauchi H."/>
            <person name="Ng P."/>
            <person name="Nilsson R."/>
            <person name="Nishiguchi S."/>
            <person name="Nishikawa S."/>
            <person name="Nori F."/>
            <person name="Ohara O."/>
            <person name="Okazaki Y."/>
            <person name="Orlando V."/>
            <person name="Pang K.C."/>
            <person name="Pavan W.J."/>
            <person name="Pavesi G."/>
            <person name="Pesole G."/>
            <person name="Petrovsky N."/>
            <person name="Piazza S."/>
            <person name="Reed J."/>
            <person name="Reid J.F."/>
            <person name="Ring B.Z."/>
            <person name="Ringwald M."/>
            <person name="Rost B."/>
            <person name="Ruan Y."/>
            <person name="Salzberg S.L."/>
            <person name="Sandelin A."/>
            <person name="Schneider C."/>
            <person name="Schoenbach C."/>
            <person name="Sekiguchi K."/>
            <person name="Semple C.A."/>
            <person name="Seno S."/>
            <person name="Sessa L."/>
            <person name="Sheng Y."/>
            <person name="Shibata Y."/>
            <person name="Shimada H."/>
            <person name="Shimada K."/>
            <person name="Silva D."/>
            <person name="Sinclair B."/>
            <person name="Sperling S."/>
            <person name="Stupka E."/>
            <person name="Sugiura K."/>
            <person name="Sultana R."/>
            <person name="Takenaka Y."/>
            <person name="Taki K."/>
            <person name="Tammoja K."/>
            <person name="Tan S.L."/>
            <person name="Tang S."/>
            <person name="Taylor M.S."/>
            <person name="Tegner J."/>
            <person name="Teichmann S.A."/>
            <person name="Ueda H.R."/>
            <person name="van Nimwegen E."/>
            <person name="Verardo R."/>
            <person name="Wei C.L."/>
            <person name="Yagi K."/>
            <person name="Yamanishi H."/>
            <person name="Zabarovsky E."/>
            <person name="Zhu S."/>
            <person name="Zimmer A."/>
            <person name="Hide W."/>
            <person name="Bult C."/>
            <person name="Grimmond S.M."/>
            <person name="Teasdale R.D."/>
            <person name="Liu E.T."/>
            <person name="Brusic V."/>
            <person name="Quackenbush J."/>
            <person name="Wahlestedt C."/>
            <person name="Mattick J.S."/>
            <person name="Hume D.A."/>
            <person name="Kai C."/>
            <person name="Sasaki D."/>
            <person name="Tomaru Y."/>
            <person name="Fukuda S."/>
            <person name="Kanamori-Katayama M."/>
            <person name="Suzuki M."/>
            <person name="Aoki J."/>
            <person name="Arakawa T."/>
            <person name="Iida J."/>
            <person name="Imamura K."/>
            <person name="Itoh M."/>
            <person name="Kato T."/>
            <person name="Kawaji H."/>
            <person name="Kawagashira N."/>
            <person name="Kawashima T."/>
            <person name="Kojima M."/>
            <person name="Kondo S."/>
            <person name="Konno H."/>
            <person name="Nakano K."/>
            <person name="Ninomiya N."/>
            <person name="Nishio T."/>
            <person name="Okada M."/>
            <person name="Plessy C."/>
            <person name="Shibata K."/>
            <person name="Shiraki T."/>
            <person name="Suzuki S."/>
            <person name="Tagami M."/>
            <person name="Waki K."/>
            <person name="Watahiki A."/>
            <person name="Okamura-Oho Y."/>
            <person name="Suzuki H."/>
            <person name="Kawai J."/>
            <person name="Hayashizaki Y."/>
        </authorList>
    </citation>
    <scope>NUCLEOTIDE SEQUENCE [LARGE SCALE MRNA]</scope>
    <source>
        <strain>C57BL/6J</strain>
        <tissue>Pituitary</tissue>
    </source>
</reference>
<reference key="4">
    <citation type="journal article" date="2010" name="Cell">
        <title>A tissue-specific atlas of mouse protein phosphorylation and expression.</title>
        <authorList>
            <person name="Huttlin E.L."/>
            <person name="Jedrychowski M.P."/>
            <person name="Elias J.E."/>
            <person name="Goswami T."/>
            <person name="Rad R."/>
            <person name="Beausoleil S.A."/>
            <person name="Villen J."/>
            <person name="Haas W."/>
            <person name="Sowa M.E."/>
            <person name="Gygi S.P."/>
        </authorList>
    </citation>
    <scope>IDENTIFICATION BY MASS SPECTROMETRY [LARGE SCALE ANALYSIS]</scope>
    <source>
        <tissue>Brain</tissue>
        <tissue>Brown adipose tissue</tissue>
        <tissue>Heart</tissue>
        <tissue>Kidney</tissue>
        <tissue>Liver</tissue>
        <tissue>Lung</tissue>
        <tissue>Pancreas</tissue>
        <tissue>Spleen</tissue>
        <tissue>Testis</tissue>
    </source>
</reference>
<proteinExistence type="evidence at protein level"/>
<dbReference type="EMBL" id="AF022770">
    <property type="protein sequence ID" value="AAB71197.3"/>
    <property type="molecule type" value="mRNA"/>
</dbReference>
<dbReference type="EMBL" id="AF501319">
    <property type="protein sequence ID" value="AAM22185.1"/>
    <property type="molecule type" value="Genomic_DNA"/>
</dbReference>
<dbReference type="EMBL" id="AK030371">
    <property type="protein sequence ID" value="BAC26928.1"/>
    <property type="molecule type" value="mRNA"/>
</dbReference>
<dbReference type="CCDS" id="CCDS15572.1"/>
<dbReference type="RefSeq" id="NP_573488.2">
    <property type="nucleotide sequence ID" value="NM_133225.3"/>
</dbReference>
<dbReference type="SMR" id="Q8BMP6"/>
<dbReference type="BioGRID" id="228422">
    <property type="interactions" value="20"/>
</dbReference>
<dbReference type="FunCoup" id="Q8BMP6">
    <property type="interactions" value="3838"/>
</dbReference>
<dbReference type="IntAct" id="Q8BMP6">
    <property type="interactions" value="1"/>
</dbReference>
<dbReference type="STRING" id="10090.ENSMUSP00000027780"/>
<dbReference type="iPTMnet" id="Q8BMP6"/>
<dbReference type="PhosphoSitePlus" id="Q8BMP6"/>
<dbReference type="SwissPalm" id="Q8BMP6"/>
<dbReference type="jPOST" id="Q8BMP6"/>
<dbReference type="PaxDb" id="10090-ENSMUSP00000027780"/>
<dbReference type="PeptideAtlas" id="Q8BMP6"/>
<dbReference type="ProteomicsDB" id="265735"/>
<dbReference type="Pumba" id="Q8BMP6"/>
<dbReference type="DNASU" id="170760"/>
<dbReference type="GeneID" id="170760"/>
<dbReference type="KEGG" id="mmu:170760"/>
<dbReference type="UCSC" id="uc007dwq.2">
    <property type="organism name" value="mouse"/>
</dbReference>
<dbReference type="AGR" id="MGI:2181074"/>
<dbReference type="CTD" id="64746"/>
<dbReference type="MGI" id="MGI:2181074">
    <property type="gene designation" value="Acbd3"/>
</dbReference>
<dbReference type="eggNOG" id="KOG3878">
    <property type="taxonomic scope" value="Eukaryota"/>
</dbReference>
<dbReference type="InParanoid" id="Q8BMP6"/>
<dbReference type="OrthoDB" id="5839451at2759"/>
<dbReference type="PhylomeDB" id="Q8BMP6"/>
<dbReference type="TreeFam" id="TF321667"/>
<dbReference type="Reactome" id="R-MMU-432722">
    <property type="pathway name" value="Golgi Associated Vesicle Biogenesis"/>
</dbReference>
<dbReference type="BioGRID-ORCS" id="170760">
    <property type="hits" value="2 hits in 78 CRISPR screens"/>
</dbReference>
<dbReference type="ChiTaRS" id="Acbd3">
    <property type="organism name" value="mouse"/>
</dbReference>
<dbReference type="PRO" id="PR:Q8BMP6"/>
<dbReference type="Proteomes" id="UP000000589">
    <property type="component" value="Unplaced"/>
</dbReference>
<dbReference type="RNAct" id="Q8BMP6">
    <property type="molecule type" value="protein"/>
</dbReference>
<dbReference type="GO" id="GO:0000139">
    <property type="term" value="C:Golgi membrane"/>
    <property type="evidence" value="ECO:0007669"/>
    <property type="project" value="UniProtKB-SubCell"/>
</dbReference>
<dbReference type="GO" id="GO:0005739">
    <property type="term" value="C:mitochondrion"/>
    <property type="evidence" value="ECO:0007669"/>
    <property type="project" value="UniProtKB-SubCell"/>
</dbReference>
<dbReference type="GO" id="GO:0000062">
    <property type="term" value="F:fatty-acyl-CoA binding"/>
    <property type="evidence" value="ECO:0007669"/>
    <property type="project" value="InterPro"/>
</dbReference>
<dbReference type="GO" id="GO:0006694">
    <property type="term" value="P:steroid biosynthetic process"/>
    <property type="evidence" value="ECO:0007669"/>
    <property type="project" value="UniProtKB-KW"/>
</dbReference>
<dbReference type="FunFam" id="1.20.80.10:FF:000017">
    <property type="entry name" value="Golgi resident protein GCP60"/>
    <property type="match status" value="1"/>
</dbReference>
<dbReference type="FunFam" id="2.60.120.680:FF:000002">
    <property type="entry name" value="Putative Golgi resident protein GCP60"/>
    <property type="match status" value="1"/>
</dbReference>
<dbReference type="Gene3D" id="1.20.80.10">
    <property type="match status" value="1"/>
</dbReference>
<dbReference type="Gene3D" id="2.60.120.680">
    <property type="entry name" value="GOLD domain"/>
    <property type="match status" value="2"/>
</dbReference>
<dbReference type="InterPro" id="IPR022408">
    <property type="entry name" value="Acyl-CoA-binding_prot_CS"/>
</dbReference>
<dbReference type="InterPro" id="IPR000582">
    <property type="entry name" value="Acyl-CoA-binding_protein"/>
</dbReference>
<dbReference type="InterPro" id="IPR035984">
    <property type="entry name" value="Acyl-CoA-binding_sf"/>
</dbReference>
<dbReference type="InterPro" id="IPR014352">
    <property type="entry name" value="FERM/acyl-CoA-bd_prot_sf"/>
</dbReference>
<dbReference type="InterPro" id="IPR009038">
    <property type="entry name" value="GOLD_dom"/>
</dbReference>
<dbReference type="InterPro" id="IPR036598">
    <property type="entry name" value="GOLD_dom_sf"/>
</dbReference>
<dbReference type="InterPro" id="IPR052269">
    <property type="entry name" value="Golgi-PI4KB_interaction"/>
</dbReference>
<dbReference type="PANTHER" id="PTHR22973:SF11">
    <property type="entry name" value="GOLGI RESIDENT PROTEIN GCP60"/>
    <property type="match status" value="1"/>
</dbReference>
<dbReference type="PANTHER" id="PTHR22973">
    <property type="entry name" value="LD35087P"/>
    <property type="match status" value="1"/>
</dbReference>
<dbReference type="Pfam" id="PF00887">
    <property type="entry name" value="ACBP"/>
    <property type="match status" value="1"/>
</dbReference>
<dbReference type="Pfam" id="PF13897">
    <property type="entry name" value="GOLD_2"/>
    <property type="match status" value="1"/>
</dbReference>
<dbReference type="SUPFAM" id="SSF47027">
    <property type="entry name" value="Acyl-CoA binding protein"/>
    <property type="match status" value="1"/>
</dbReference>
<dbReference type="SUPFAM" id="SSF101576">
    <property type="entry name" value="Supernatant protein factor (SPF), C-terminal domain"/>
    <property type="match status" value="1"/>
</dbReference>
<dbReference type="PROSITE" id="PS00880">
    <property type="entry name" value="ACB_1"/>
    <property type="match status" value="1"/>
</dbReference>
<dbReference type="PROSITE" id="PS51228">
    <property type="entry name" value="ACB_2"/>
    <property type="match status" value="1"/>
</dbReference>
<dbReference type="PROSITE" id="PS50866">
    <property type="entry name" value="GOLD"/>
    <property type="match status" value="1"/>
</dbReference>
<name>GCP60_MOUSE</name>
<comment type="function">
    <text evidence="1 7">Involved in the maintenance of Golgi structure by interacting with giantin, affecting protein transport between the endoplasmic reticulum and Golgi (By similarity). Involved in hormone-induced steroid biosynthesis in testicular Leydig cells (PubMed:12711385). Recruits PI4KB to the Golgi apparatus membrane; enhances the enzyme activity of PI4KB activity via its membrane recruitment thereby increasing the local concentration of the substrate in the vicinity of the kinase (By similarity).</text>
</comment>
<comment type="subunit">
    <text evidence="1 6">Homodimer (By similarity). Interacts with the C-terminal cytoplasmic domain of giantin/GOLGB1 (By similarity). Interacts with PBR and PKA regulatory subunit RI-alpha. Does not interact with PKA regulatory subunit RI-beta nor PKA regulatory subunit RII-alpha (PubMed:11731621). Interacts (via Q domain) with PI4KB (via N-terminus) (By similarity). Interacts (via Q domain) with TBC1D22A and TBC1D22B; interactions with PI4KB and with TBC1D22A and TBC1D22B are mutually exclusive (By similarity). Interacts with C10ORF76 and RAB11B (By similarity).</text>
</comment>
<comment type="subcellular location">
    <subcellularLocation>
        <location evidence="7">Golgi apparatus membrane</location>
        <topology evidence="7">Peripheral membrane protein</topology>
        <orientation evidence="7">Cytoplasmic side</orientation>
    </subcellularLocation>
    <subcellularLocation>
        <location evidence="7">Mitochondrion</location>
    </subcellularLocation>
    <text>Also mitochondrial (via its interaction with PBR).</text>
</comment>
<comment type="tissue specificity">
    <text evidence="6">Expressed in brain (hippocampus, olfactory bulb, neuronal and glial cells of the cortex), eye, submaxillary gland, testis (interstitial and tubular compartments), ovary (granulosa cells, theca cells at late stages and primary follicles), adrenal gland (fasciculata and glomerulosa cells), heart, liver, and steroidogenic cell lines.</text>
</comment>
<comment type="developmental stage">
    <text evidence="6">Present in embryo. Decreases before birth.</text>
</comment>
<comment type="domain">
    <text evidence="1">The central Gln-rich region (Q domain) is involved in binding to PI4KB, TBC1D22A and TBC1D22B (By similarity). The C-terminal GOLD domain is essential for giantin binding. The GOLD domain is also involved in homodimerization (By similarity).</text>
</comment>
<organism>
    <name type="scientific">Mus musculus</name>
    <name type="common">Mouse</name>
    <dbReference type="NCBI Taxonomy" id="10090"/>
    <lineage>
        <taxon>Eukaryota</taxon>
        <taxon>Metazoa</taxon>
        <taxon>Chordata</taxon>
        <taxon>Craniata</taxon>
        <taxon>Vertebrata</taxon>
        <taxon>Euteleostomi</taxon>
        <taxon>Mammalia</taxon>
        <taxon>Eutheria</taxon>
        <taxon>Euarchontoglires</taxon>
        <taxon>Glires</taxon>
        <taxon>Rodentia</taxon>
        <taxon>Myomorpha</taxon>
        <taxon>Muroidea</taxon>
        <taxon>Muridae</taxon>
        <taxon>Murinae</taxon>
        <taxon>Mus</taxon>
        <taxon>Mus</taxon>
    </lineage>
</organism>